<proteinExistence type="inferred from homology"/>
<comment type="subcellular location">
    <subcellularLocation>
        <location evidence="1">Cytoplasm</location>
    </subcellularLocation>
</comment>
<comment type="similarity">
    <text evidence="1">Belongs to the UPF0294 family.</text>
</comment>
<comment type="sequence caution" evidence="1">
    <conflict type="erroneous initiation">
        <sequence resource="EMBL-CDS" id="BAB33628"/>
    </conflict>
    <text>Truncated N-terminus.</text>
</comment>
<reference key="1">
    <citation type="journal article" date="2001" name="Nature">
        <title>Genome sequence of enterohaemorrhagic Escherichia coli O157:H7.</title>
        <authorList>
            <person name="Perna N.T."/>
            <person name="Plunkett G. III"/>
            <person name="Burland V."/>
            <person name="Mau B."/>
            <person name="Glasner J.D."/>
            <person name="Rose D.J."/>
            <person name="Mayhew G.F."/>
            <person name="Evans P.S."/>
            <person name="Gregor J."/>
            <person name="Kirkpatrick H.A."/>
            <person name="Posfai G."/>
            <person name="Hackett J."/>
            <person name="Klink S."/>
            <person name="Boutin A."/>
            <person name="Shao Y."/>
            <person name="Miller L."/>
            <person name="Grotbeck E.J."/>
            <person name="Davis N.W."/>
            <person name="Lim A."/>
            <person name="Dimalanta E.T."/>
            <person name="Potamousis K."/>
            <person name="Apodaca J."/>
            <person name="Anantharaman T.S."/>
            <person name="Lin J."/>
            <person name="Yen G."/>
            <person name="Schwartz D.C."/>
            <person name="Welch R.A."/>
            <person name="Blattner F.R."/>
        </authorList>
    </citation>
    <scope>NUCLEOTIDE SEQUENCE [LARGE SCALE GENOMIC DNA]</scope>
    <source>
        <strain>O157:H7 / EDL933 / ATCC 700927 / EHEC</strain>
    </source>
</reference>
<reference key="2">
    <citation type="journal article" date="2001" name="DNA Res.">
        <title>Complete genome sequence of enterohemorrhagic Escherichia coli O157:H7 and genomic comparison with a laboratory strain K-12.</title>
        <authorList>
            <person name="Hayashi T."/>
            <person name="Makino K."/>
            <person name="Ohnishi M."/>
            <person name="Kurokawa K."/>
            <person name="Ishii K."/>
            <person name="Yokoyama K."/>
            <person name="Han C.-G."/>
            <person name="Ohtsubo E."/>
            <person name="Nakayama K."/>
            <person name="Murata T."/>
            <person name="Tanaka M."/>
            <person name="Tobe T."/>
            <person name="Iida T."/>
            <person name="Takami H."/>
            <person name="Honda T."/>
            <person name="Sasakawa C."/>
            <person name="Ogasawara N."/>
            <person name="Yasunaga T."/>
            <person name="Kuhara S."/>
            <person name="Shiba T."/>
            <person name="Hattori M."/>
            <person name="Shinagawa H."/>
        </authorList>
    </citation>
    <scope>NUCLEOTIDE SEQUENCE [LARGE SCALE GENOMIC DNA]</scope>
    <source>
        <strain>O157:H7 / Sakai / RIMD 0509952 / EHEC</strain>
    </source>
</reference>
<dbReference type="EMBL" id="AE005174">
    <property type="protein sequence ID" value="AAG54505.1"/>
    <property type="molecule type" value="Genomic_DNA"/>
</dbReference>
<dbReference type="EMBL" id="BA000007">
    <property type="protein sequence ID" value="BAB33628.2"/>
    <property type="status" value="ALT_INIT"/>
    <property type="molecule type" value="Genomic_DNA"/>
</dbReference>
<dbReference type="PIR" id="E85505">
    <property type="entry name" value="E85505"/>
</dbReference>
<dbReference type="PIR" id="E90654">
    <property type="entry name" value="E90654"/>
</dbReference>
<dbReference type="RefSeq" id="NP_308232.1">
    <property type="nucleotide sequence ID" value="NC_002695.1"/>
</dbReference>
<dbReference type="RefSeq" id="WP_001230983.1">
    <property type="nucleotide sequence ID" value="NZ_VOAI01000020.1"/>
</dbReference>
<dbReference type="SMR" id="P0A8U4"/>
<dbReference type="STRING" id="155864.Z0232"/>
<dbReference type="GeneID" id="914037"/>
<dbReference type="KEGG" id="ece:Z0232"/>
<dbReference type="KEGG" id="ecs:ECs_0205"/>
<dbReference type="PATRIC" id="fig|386585.9.peg.309"/>
<dbReference type="eggNOG" id="COG3021">
    <property type="taxonomic scope" value="Bacteria"/>
</dbReference>
<dbReference type="HOGENOM" id="CLU_083563_0_0_6"/>
<dbReference type="OMA" id="HAINFSF"/>
<dbReference type="Proteomes" id="UP000000558">
    <property type="component" value="Chromosome"/>
</dbReference>
<dbReference type="Proteomes" id="UP000002519">
    <property type="component" value="Chromosome"/>
</dbReference>
<dbReference type="GO" id="GO:0005737">
    <property type="term" value="C:cytoplasm"/>
    <property type="evidence" value="ECO:0007669"/>
    <property type="project" value="UniProtKB-SubCell"/>
</dbReference>
<dbReference type="GO" id="GO:0003824">
    <property type="term" value="F:catalytic activity"/>
    <property type="evidence" value="ECO:0007669"/>
    <property type="project" value="InterPro"/>
</dbReference>
<dbReference type="Gene3D" id="3.60.10.10">
    <property type="entry name" value="Endonuclease/exonuclease/phosphatase"/>
    <property type="match status" value="1"/>
</dbReference>
<dbReference type="HAMAP" id="MF_01119">
    <property type="entry name" value="UPF0294"/>
    <property type="match status" value="1"/>
</dbReference>
<dbReference type="InterPro" id="IPR036691">
    <property type="entry name" value="Endo/exonu/phosph_ase_sf"/>
</dbReference>
<dbReference type="InterPro" id="IPR005135">
    <property type="entry name" value="Endo/exonuclease/phosphatase"/>
</dbReference>
<dbReference type="InterPro" id="IPR022958">
    <property type="entry name" value="UPF0294"/>
</dbReference>
<dbReference type="NCBIfam" id="NF003839">
    <property type="entry name" value="PRK05421.1-1"/>
    <property type="match status" value="1"/>
</dbReference>
<dbReference type="NCBIfam" id="NF003840">
    <property type="entry name" value="PRK05421.1-2"/>
    <property type="match status" value="1"/>
</dbReference>
<dbReference type="NCBIfam" id="NF003841">
    <property type="entry name" value="PRK05421.1-3"/>
    <property type="match status" value="1"/>
</dbReference>
<dbReference type="NCBIfam" id="NF003842">
    <property type="entry name" value="PRK05421.1-4"/>
    <property type="match status" value="1"/>
</dbReference>
<dbReference type="Pfam" id="PF03372">
    <property type="entry name" value="Exo_endo_phos"/>
    <property type="match status" value="1"/>
</dbReference>
<dbReference type="SUPFAM" id="SSF56219">
    <property type="entry name" value="DNase I-like"/>
    <property type="match status" value="1"/>
</dbReference>
<protein>
    <recommendedName>
        <fullName>UPF0294 protein YafD</fullName>
    </recommendedName>
</protein>
<feature type="chain" id="PRO_0000074639" description="UPF0294 protein YafD">
    <location>
        <begin position="1"/>
        <end position="266"/>
    </location>
</feature>
<organism>
    <name type="scientific">Escherichia coli O157:H7</name>
    <dbReference type="NCBI Taxonomy" id="83334"/>
    <lineage>
        <taxon>Bacteria</taxon>
        <taxon>Pseudomonadati</taxon>
        <taxon>Pseudomonadota</taxon>
        <taxon>Gammaproteobacteria</taxon>
        <taxon>Enterobacterales</taxon>
        <taxon>Enterobacteriaceae</taxon>
        <taxon>Escherichia</taxon>
    </lineage>
</organism>
<evidence type="ECO:0000305" key="1"/>
<gene>
    <name type="primary">yafD</name>
    <name type="ordered locus">Z0232</name>
    <name type="ordered locus">ECs0205</name>
</gene>
<sequence length="266" mass="29992">MRKNTYAMRYVAGQPAERILPPGSFASIGQALPPGEPLSTEERIRILVWNIYKQQRAEWLSVLKNYGKDAHLVLLQEAQTTPELVQFATANYLAADQVPAFVLPQHPSGVMTLSAAHPVYCCPLREREPILRLAKSALVTVYPLPDTRLLMVVNIHAVNFSLGVDVYSKQLLPIGDQIAHHSGPVIMAGDFNAWSRRRMNALYRFAREMSLRQVRFTDDQRRRAFGRPLDFVFYRGLNVSEASVLVTRASDHNPLLVEFSPGKPDK</sequence>
<name>YAFD_ECO57</name>
<keyword id="KW-0963">Cytoplasm</keyword>
<keyword id="KW-1185">Reference proteome</keyword>
<accession>P0A8U4</accession>
<accession>P30865</accession>
<accession>P75671</accession>